<keyword id="KW-0687">Ribonucleoprotein</keyword>
<keyword id="KW-0689">Ribosomal protein</keyword>
<keyword id="KW-0694">RNA-binding</keyword>
<keyword id="KW-0699">rRNA-binding</keyword>
<protein>
    <recommendedName>
        <fullName evidence="1">Large ribosomal subunit protein uL10</fullName>
    </recommendedName>
    <alternativeName>
        <fullName evidence="2">50S ribosomal protein L10</fullName>
    </alternativeName>
</protein>
<proteinExistence type="inferred from homology"/>
<gene>
    <name evidence="1" type="primary">rplJ</name>
    <name type="ordered locus">ACIAD0305</name>
</gene>
<feature type="chain" id="PRO_0000154576" description="Large ribosomal subunit protein uL10">
    <location>
        <begin position="1"/>
        <end position="168"/>
    </location>
</feature>
<evidence type="ECO:0000255" key="1">
    <source>
        <dbReference type="HAMAP-Rule" id="MF_00362"/>
    </source>
</evidence>
<evidence type="ECO:0000305" key="2"/>
<name>RL10_ACIAD</name>
<sequence>MALLIEDKKQIVAEVSEIASTAFAAVVADYQGLTVEQLTTLRVEARKLGVATRVVRNTLAKRALQDTPFSILNDDLVGPTILAFSTSEDDMGAAARLFEEFAKTNKVFELKAAAFEGKLYQGADVSVIANLPNQEKALTMLASVLQAPVSKLGRLITALKEKNESEAA</sequence>
<dbReference type="EMBL" id="CR543861">
    <property type="protein sequence ID" value="CAG67265.1"/>
    <property type="status" value="ALT_INIT"/>
    <property type="molecule type" value="Genomic_DNA"/>
</dbReference>
<dbReference type="RefSeq" id="WP_026056992.1">
    <property type="nucleotide sequence ID" value="NC_005966.1"/>
</dbReference>
<dbReference type="SMR" id="Q6FF92"/>
<dbReference type="STRING" id="202950.GCA_001485005_00579"/>
<dbReference type="GeneID" id="45232819"/>
<dbReference type="KEGG" id="aci:ACIAD0305"/>
<dbReference type="eggNOG" id="COG0244">
    <property type="taxonomic scope" value="Bacteria"/>
</dbReference>
<dbReference type="HOGENOM" id="CLU_092227_0_2_6"/>
<dbReference type="OrthoDB" id="9808307at2"/>
<dbReference type="BioCyc" id="ASP62977:ACIAD_RS01450-MONOMER"/>
<dbReference type="Proteomes" id="UP000000430">
    <property type="component" value="Chromosome"/>
</dbReference>
<dbReference type="GO" id="GO:0015934">
    <property type="term" value="C:large ribosomal subunit"/>
    <property type="evidence" value="ECO:0007669"/>
    <property type="project" value="InterPro"/>
</dbReference>
<dbReference type="GO" id="GO:0070180">
    <property type="term" value="F:large ribosomal subunit rRNA binding"/>
    <property type="evidence" value="ECO:0007669"/>
    <property type="project" value="UniProtKB-UniRule"/>
</dbReference>
<dbReference type="GO" id="GO:0003735">
    <property type="term" value="F:structural constituent of ribosome"/>
    <property type="evidence" value="ECO:0007669"/>
    <property type="project" value="InterPro"/>
</dbReference>
<dbReference type="GO" id="GO:0006412">
    <property type="term" value="P:translation"/>
    <property type="evidence" value="ECO:0007669"/>
    <property type="project" value="UniProtKB-UniRule"/>
</dbReference>
<dbReference type="CDD" id="cd05797">
    <property type="entry name" value="Ribosomal_L10"/>
    <property type="match status" value="1"/>
</dbReference>
<dbReference type="Gene3D" id="3.30.70.1730">
    <property type="match status" value="1"/>
</dbReference>
<dbReference type="HAMAP" id="MF_00362">
    <property type="entry name" value="Ribosomal_uL10"/>
    <property type="match status" value="1"/>
</dbReference>
<dbReference type="InterPro" id="IPR001790">
    <property type="entry name" value="Ribosomal_uL10"/>
</dbReference>
<dbReference type="InterPro" id="IPR043141">
    <property type="entry name" value="Ribosomal_uL10-like_sf"/>
</dbReference>
<dbReference type="InterPro" id="IPR022973">
    <property type="entry name" value="Ribosomal_uL10_bac"/>
</dbReference>
<dbReference type="InterPro" id="IPR047865">
    <property type="entry name" value="Ribosomal_uL10_bac_type"/>
</dbReference>
<dbReference type="InterPro" id="IPR002363">
    <property type="entry name" value="Ribosomal_uL10_CS_bac"/>
</dbReference>
<dbReference type="NCBIfam" id="NF000955">
    <property type="entry name" value="PRK00099.1-1"/>
    <property type="match status" value="1"/>
</dbReference>
<dbReference type="PANTHER" id="PTHR11560">
    <property type="entry name" value="39S RIBOSOMAL PROTEIN L10, MITOCHONDRIAL"/>
    <property type="match status" value="1"/>
</dbReference>
<dbReference type="Pfam" id="PF00466">
    <property type="entry name" value="Ribosomal_L10"/>
    <property type="match status" value="1"/>
</dbReference>
<dbReference type="SUPFAM" id="SSF160369">
    <property type="entry name" value="Ribosomal protein L10-like"/>
    <property type="match status" value="1"/>
</dbReference>
<dbReference type="PROSITE" id="PS01109">
    <property type="entry name" value="RIBOSOMAL_L10"/>
    <property type="match status" value="1"/>
</dbReference>
<accession>Q6FF92</accession>
<organism>
    <name type="scientific">Acinetobacter baylyi (strain ATCC 33305 / BD413 / ADP1)</name>
    <dbReference type="NCBI Taxonomy" id="62977"/>
    <lineage>
        <taxon>Bacteria</taxon>
        <taxon>Pseudomonadati</taxon>
        <taxon>Pseudomonadota</taxon>
        <taxon>Gammaproteobacteria</taxon>
        <taxon>Moraxellales</taxon>
        <taxon>Moraxellaceae</taxon>
        <taxon>Acinetobacter</taxon>
    </lineage>
</organism>
<reference key="1">
    <citation type="journal article" date="2004" name="Nucleic Acids Res.">
        <title>Unique features revealed by the genome sequence of Acinetobacter sp. ADP1, a versatile and naturally transformation competent bacterium.</title>
        <authorList>
            <person name="Barbe V."/>
            <person name="Vallenet D."/>
            <person name="Fonknechten N."/>
            <person name="Kreimeyer A."/>
            <person name="Oztas S."/>
            <person name="Labarre L."/>
            <person name="Cruveiller S."/>
            <person name="Robert C."/>
            <person name="Duprat S."/>
            <person name="Wincker P."/>
            <person name="Ornston L.N."/>
            <person name="Weissenbach J."/>
            <person name="Marliere P."/>
            <person name="Cohen G.N."/>
            <person name="Medigue C."/>
        </authorList>
    </citation>
    <scope>NUCLEOTIDE SEQUENCE [LARGE SCALE GENOMIC DNA]</scope>
    <source>
        <strain>ATCC 33305 / BD413 / ADP1</strain>
    </source>
</reference>
<comment type="function">
    <text evidence="1">Forms part of the ribosomal stalk, playing a central role in the interaction of the ribosome with GTP-bound translation factors.</text>
</comment>
<comment type="subunit">
    <text evidence="1">Part of the ribosomal stalk of the 50S ribosomal subunit. The N-terminus interacts with L11 and the large rRNA to form the base of the stalk. The C-terminus forms an elongated spine to which L12 dimers bind in a sequential fashion forming a multimeric L10(L12)X complex.</text>
</comment>
<comment type="similarity">
    <text evidence="1">Belongs to the universal ribosomal protein uL10 family.</text>
</comment>
<comment type="sequence caution" evidence="2">
    <conflict type="erroneous initiation">
        <sequence resource="EMBL-CDS" id="CAG67265"/>
    </conflict>
</comment>